<accession>A0AVT1</accession>
<accession>A6N8M7</accession>
<accession>B2RAV3</accession>
<accession>Q4W5K0</accession>
<accession>Q6UV21</accession>
<accession>Q86T78</accession>
<accession>Q86TC7</accession>
<accession>Q8N5T3</accession>
<accession>Q8N9E4</accession>
<accession>Q9H3T7</accession>
<accession>Q9NVC9</accession>
<dbReference type="EC" id="6.2.1.45" evidence="11 12"/>
<dbReference type="EMBL" id="AY359880">
    <property type="protein sequence ID" value="AAQ63403.1"/>
    <property type="molecule type" value="mRNA"/>
</dbReference>
<dbReference type="EMBL" id="EF623993">
    <property type="protein sequence ID" value="ABR25253.1"/>
    <property type="molecule type" value="mRNA"/>
</dbReference>
<dbReference type="EMBL" id="AB014773">
    <property type="protein sequence ID" value="BAB19785.1"/>
    <property type="molecule type" value="mRNA"/>
</dbReference>
<dbReference type="EMBL" id="AK001670">
    <property type="protein sequence ID" value="BAA91824.1"/>
    <property type="status" value="ALT_INIT"/>
    <property type="molecule type" value="mRNA"/>
</dbReference>
<dbReference type="EMBL" id="AK094969">
    <property type="protein sequence ID" value="BAC04463.1"/>
    <property type="molecule type" value="mRNA"/>
</dbReference>
<dbReference type="EMBL" id="AK314371">
    <property type="protein sequence ID" value="BAG37000.1"/>
    <property type="molecule type" value="mRNA"/>
</dbReference>
<dbReference type="EMBL" id="AL832015">
    <property type="protein sequence ID" value="CAD89908.1"/>
    <property type="molecule type" value="mRNA"/>
</dbReference>
<dbReference type="EMBL" id="AL832458">
    <property type="protein sequence ID" value="CAD89959.1"/>
    <property type="molecule type" value="mRNA"/>
</dbReference>
<dbReference type="EMBL" id="AC079880">
    <property type="status" value="NOT_ANNOTATED_CDS"/>
    <property type="molecule type" value="Genomic_DNA"/>
</dbReference>
<dbReference type="EMBL" id="AC096720">
    <property type="protein sequence ID" value="AAY40999.1"/>
    <property type="molecule type" value="Genomic_DNA"/>
</dbReference>
<dbReference type="EMBL" id="BC031637">
    <property type="protein sequence ID" value="AAH31637.1"/>
    <property type="molecule type" value="mRNA"/>
</dbReference>
<dbReference type="EMBL" id="BC126484">
    <property type="protein sequence ID" value="AAI26485.1"/>
    <property type="molecule type" value="mRNA"/>
</dbReference>
<dbReference type="EMBL" id="BC126486">
    <property type="protein sequence ID" value="AAI26487.1"/>
    <property type="molecule type" value="mRNA"/>
</dbReference>
<dbReference type="CCDS" id="CCDS3516.1">
    <molecule id="A0AVT1-1"/>
</dbReference>
<dbReference type="RefSeq" id="NP_060697.4">
    <molecule id="A0AVT1-1"/>
    <property type="nucleotide sequence ID" value="NM_018227.5"/>
</dbReference>
<dbReference type="PDB" id="7PVN">
    <property type="method" value="X-ray"/>
    <property type="resolution" value="2.71 A"/>
    <property type="chains" value="A/B=1-1052"/>
</dbReference>
<dbReference type="PDB" id="7PYV">
    <property type="method" value="X-ray"/>
    <property type="resolution" value="3.27 A"/>
    <property type="chains" value="A/B=1-623, A/B=900-1052"/>
</dbReference>
<dbReference type="PDB" id="7SOL">
    <property type="method" value="X-ray"/>
    <property type="resolution" value="2.25 A"/>
    <property type="chains" value="A/C=37-1052"/>
</dbReference>
<dbReference type="PDBsum" id="7PVN"/>
<dbReference type="PDBsum" id="7PYV"/>
<dbReference type="PDBsum" id="7SOL"/>
<dbReference type="SMR" id="A0AVT1"/>
<dbReference type="BioGRID" id="120529">
    <property type="interactions" value="199"/>
</dbReference>
<dbReference type="DIP" id="DIP-57633N"/>
<dbReference type="FunCoup" id="A0AVT1">
    <property type="interactions" value="3168"/>
</dbReference>
<dbReference type="IntAct" id="A0AVT1">
    <property type="interactions" value="30"/>
</dbReference>
<dbReference type="MINT" id="A0AVT1"/>
<dbReference type="STRING" id="9606.ENSP00000313454"/>
<dbReference type="BindingDB" id="A0AVT1"/>
<dbReference type="ChEMBL" id="CHEMBL2321622"/>
<dbReference type="GlyCosmos" id="A0AVT1">
    <property type="glycosylation" value="1 site, 1 glycan"/>
</dbReference>
<dbReference type="GlyGen" id="A0AVT1">
    <property type="glycosylation" value="2 sites, 2 N-linked glycans (1 site), 1 O-linked glycan (1 site)"/>
</dbReference>
<dbReference type="iPTMnet" id="A0AVT1"/>
<dbReference type="MetOSite" id="A0AVT1"/>
<dbReference type="PhosphoSitePlus" id="A0AVT1"/>
<dbReference type="SwissPalm" id="A0AVT1"/>
<dbReference type="BioMuta" id="UBA6"/>
<dbReference type="jPOST" id="A0AVT1"/>
<dbReference type="MassIVE" id="A0AVT1"/>
<dbReference type="PaxDb" id="9606-ENSP00000313454"/>
<dbReference type="PeptideAtlas" id="A0AVT1"/>
<dbReference type="ProteomicsDB" id="26">
    <molecule id="A0AVT1-1"/>
</dbReference>
<dbReference type="ProteomicsDB" id="27">
    <molecule id="A0AVT1-2"/>
</dbReference>
<dbReference type="ProteomicsDB" id="28">
    <molecule id="A0AVT1-3"/>
</dbReference>
<dbReference type="ProteomicsDB" id="29">
    <molecule id="A0AVT1-4"/>
</dbReference>
<dbReference type="Pumba" id="A0AVT1"/>
<dbReference type="Antibodypedia" id="24140">
    <property type="antibodies" value="301 antibodies from 33 providers"/>
</dbReference>
<dbReference type="DNASU" id="55236"/>
<dbReference type="Ensembl" id="ENST00000322244.10">
    <molecule id="A0AVT1-1"/>
    <property type="protein sequence ID" value="ENSP00000313454.4"/>
    <property type="gene ID" value="ENSG00000033178.13"/>
</dbReference>
<dbReference type="Ensembl" id="ENST00000420827.2">
    <molecule id="A0AVT1-3"/>
    <property type="protein sequence ID" value="ENSP00000399234.2"/>
    <property type="gene ID" value="ENSG00000033178.13"/>
</dbReference>
<dbReference type="GeneID" id="55236"/>
<dbReference type="KEGG" id="hsa:55236"/>
<dbReference type="MANE-Select" id="ENST00000322244.10">
    <property type="protein sequence ID" value="ENSP00000313454.4"/>
    <property type="RefSeq nucleotide sequence ID" value="NM_018227.6"/>
    <property type="RefSeq protein sequence ID" value="NP_060697.4"/>
</dbReference>
<dbReference type="UCSC" id="uc003hdg.5">
    <molecule id="A0AVT1-1"/>
    <property type="organism name" value="human"/>
</dbReference>
<dbReference type="AGR" id="HGNC:25581"/>
<dbReference type="CTD" id="55236"/>
<dbReference type="DisGeNET" id="55236"/>
<dbReference type="GeneCards" id="UBA6"/>
<dbReference type="HGNC" id="HGNC:25581">
    <property type="gene designation" value="UBA6"/>
</dbReference>
<dbReference type="HPA" id="ENSG00000033178">
    <property type="expression patterns" value="Low tissue specificity"/>
</dbReference>
<dbReference type="MIM" id="611361">
    <property type="type" value="gene"/>
</dbReference>
<dbReference type="neXtProt" id="NX_A0AVT1"/>
<dbReference type="OpenTargets" id="ENSG00000033178"/>
<dbReference type="PharmGKB" id="PA162407690"/>
<dbReference type="VEuPathDB" id="HostDB:ENSG00000033178"/>
<dbReference type="eggNOG" id="KOG2012">
    <property type="taxonomic scope" value="Eukaryota"/>
</dbReference>
<dbReference type="GeneTree" id="ENSGT00940000158826"/>
<dbReference type="HOGENOM" id="CLU_002556_0_0_1"/>
<dbReference type="InParanoid" id="A0AVT1"/>
<dbReference type="OMA" id="WSHCVEL"/>
<dbReference type="OrthoDB" id="10252231at2759"/>
<dbReference type="PAN-GO" id="A0AVT1">
    <property type="GO annotations" value="6 GO annotations based on evolutionary models"/>
</dbReference>
<dbReference type="PhylomeDB" id="A0AVT1"/>
<dbReference type="TreeFam" id="TF300586"/>
<dbReference type="BRENDA" id="6.2.1.45">
    <property type="organism ID" value="2681"/>
</dbReference>
<dbReference type="PathwayCommons" id="A0AVT1"/>
<dbReference type="Reactome" id="R-HSA-8866652">
    <property type="pathway name" value="Synthesis of active ubiquitin: roles of E1 and E2 enzymes"/>
</dbReference>
<dbReference type="Reactome" id="R-HSA-983168">
    <property type="pathway name" value="Antigen processing: Ubiquitination &amp; Proteasome degradation"/>
</dbReference>
<dbReference type="SignaLink" id="A0AVT1"/>
<dbReference type="SIGNOR" id="A0AVT1"/>
<dbReference type="UniPathway" id="UPA00143"/>
<dbReference type="BioGRID-ORCS" id="55236">
    <property type="hits" value="253 hits in 1157 CRISPR screens"/>
</dbReference>
<dbReference type="ChiTaRS" id="UBA6">
    <property type="organism name" value="human"/>
</dbReference>
<dbReference type="GeneWiki" id="UBE1L2"/>
<dbReference type="GenomeRNAi" id="55236"/>
<dbReference type="Pharos" id="A0AVT1">
    <property type="development level" value="Tchem"/>
</dbReference>
<dbReference type="PRO" id="PR:A0AVT1"/>
<dbReference type="Proteomes" id="UP000005640">
    <property type="component" value="Chromosome 4"/>
</dbReference>
<dbReference type="RNAct" id="A0AVT1">
    <property type="molecule type" value="protein"/>
</dbReference>
<dbReference type="Bgee" id="ENSG00000033178">
    <property type="expression patterns" value="Expressed in adrenal tissue and 193 other cell types or tissues"/>
</dbReference>
<dbReference type="ExpressionAtlas" id="A0AVT1">
    <property type="expression patterns" value="baseline and differential"/>
</dbReference>
<dbReference type="GO" id="GO:0005737">
    <property type="term" value="C:cytoplasm"/>
    <property type="evidence" value="ECO:0000314"/>
    <property type="project" value="LIFEdb"/>
</dbReference>
<dbReference type="GO" id="GO:0005829">
    <property type="term" value="C:cytosol"/>
    <property type="evidence" value="ECO:0000304"/>
    <property type="project" value="Reactome"/>
</dbReference>
<dbReference type="GO" id="GO:0005634">
    <property type="term" value="C:nucleus"/>
    <property type="evidence" value="ECO:0000318"/>
    <property type="project" value="GO_Central"/>
</dbReference>
<dbReference type="GO" id="GO:0005524">
    <property type="term" value="F:ATP binding"/>
    <property type="evidence" value="ECO:0007669"/>
    <property type="project" value="UniProtKB-KW"/>
</dbReference>
<dbReference type="GO" id="GO:0019780">
    <property type="term" value="F:FAT10 activating enzyme activity"/>
    <property type="evidence" value="ECO:0000315"/>
    <property type="project" value="UniProtKB"/>
</dbReference>
<dbReference type="GO" id="GO:0004839">
    <property type="term" value="F:ubiquitin activating enzyme activity"/>
    <property type="evidence" value="ECO:0000318"/>
    <property type="project" value="GO_Central"/>
</dbReference>
<dbReference type="GO" id="GO:0006974">
    <property type="term" value="P:DNA damage response"/>
    <property type="evidence" value="ECO:0000318"/>
    <property type="project" value="GO_Central"/>
</dbReference>
<dbReference type="GO" id="GO:0016567">
    <property type="term" value="P:protein ubiquitination"/>
    <property type="evidence" value="ECO:0000315"/>
    <property type="project" value="UniProtKB"/>
</dbReference>
<dbReference type="GO" id="GO:0006511">
    <property type="term" value="P:ubiquitin-dependent protein catabolic process"/>
    <property type="evidence" value="ECO:0000315"/>
    <property type="project" value="UniProtKB"/>
</dbReference>
<dbReference type="CDD" id="cd01491">
    <property type="entry name" value="Ube1_repeat1"/>
    <property type="match status" value="1"/>
</dbReference>
<dbReference type="CDD" id="cd01490">
    <property type="entry name" value="Ube1_repeat2"/>
    <property type="match status" value="1"/>
</dbReference>
<dbReference type="FunFam" id="3.40.50.12550:FF:000001">
    <property type="entry name" value="Ubiquitin-activating enzyme E1 1"/>
    <property type="match status" value="1"/>
</dbReference>
<dbReference type="FunFam" id="3.40.50.720:FF:000015">
    <property type="entry name" value="Ubiquitin-activating enzyme E1 1"/>
    <property type="match status" value="1"/>
</dbReference>
<dbReference type="FunFam" id="2.40.30.180:FF:000002">
    <property type="entry name" value="Ubiquitin-activating enzyme E1 2"/>
    <property type="match status" value="1"/>
</dbReference>
<dbReference type="FunFam" id="3.10.290.60:FF:000003">
    <property type="entry name" value="Ubiquitin-like modifier activating enzyme 6"/>
    <property type="match status" value="1"/>
</dbReference>
<dbReference type="FunFam" id="3.50.50.80:FF:000001">
    <property type="entry name" value="ubiquitin-like modifier-activating enzyme 1"/>
    <property type="match status" value="1"/>
</dbReference>
<dbReference type="FunFam" id="1.10.10.2660:FF:000003">
    <property type="entry name" value="ubiquitin-like modifier-activating enzyme 6 isoform X1"/>
    <property type="match status" value="1"/>
</dbReference>
<dbReference type="Gene3D" id="3.40.50.720">
    <property type="entry name" value="NAD(P)-binding Rossmann-like Domain"/>
    <property type="match status" value="1"/>
</dbReference>
<dbReference type="Gene3D" id="2.40.30.180">
    <property type="entry name" value="Ubiquitin-activating enzyme E1, FCCH domain"/>
    <property type="match status" value="1"/>
</dbReference>
<dbReference type="Gene3D" id="3.50.50.80">
    <property type="entry name" value="Ubiquitin-activating enzyme E1, inactive adenylation domain, subdomain 1"/>
    <property type="match status" value="1"/>
</dbReference>
<dbReference type="Gene3D" id="3.40.50.12550">
    <property type="entry name" value="Ubiquitin-activating enzyme E1, inactive adenylation domain, subdomain 2"/>
    <property type="match status" value="1"/>
</dbReference>
<dbReference type="Gene3D" id="1.10.10.2660">
    <property type="entry name" value="Ubiquitin-activating enzyme E1, SCCH domain"/>
    <property type="match status" value="1"/>
</dbReference>
<dbReference type="Gene3D" id="3.10.290.60">
    <property type="entry name" value="Ubiquitin-activating enzyme E1, UFD domain"/>
    <property type="match status" value="1"/>
</dbReference>
<dbReference type="InterPro" id="IPR032420">
    <property type="entry name" value="E1_4HB"/>
</dbReference>
<dbReference type="InterPro" id="IPR032418">
    <property type="entry name" value="E1_FCCH"/>
</dbReference>
<dbReference type="InterPro" id="IPR042302">
    <property type="entry name" value="E1_FCCH_sf"/>
</dbReference>
<dbReference type="InterPro" id="IPR045886">
    <property type="entry name" value="ThiF/MoeB/HesA"/>
</dbReference>
<dbReference type="InterPro" id="IPR000594">
    <property type="entry name" value="ThiF_NAD_FAD-bd"/>
</dbReference>
<dbReference type="InterPro" id="IPR018965">
    <property type="entry name" value="Ub-activating_enz_E1_C"/>
</dbReference>
<dbReference type="InterPro" id="IPR042449">
    <property type="entry name" value="Ub-E1_IAD_1"/>
</dbReference>
<dbReference type="InterPro" id="IPR038252">
    <property type="entry name" value="UBA_E1_C_sf"/>
</dbReference>
<dbReference type="InterPro" id="IPR019572">
    <property type="entry name" value="UBA_E1_SCCH"/>
</dbReference>
<dbReference type="InterPro" id="IPR042063">
    <property type="entry name" value="Ubi_acti_E1_SCCH"/>
</dbReference>
<dbReference type="InterPro" id="IPR035985">
    <property type="entry name" value="Ubiquitin-activating_enz"/>
</dbReference>
<dbReference type="InterPro" id="IPR018075">
    <property type="entry name" value="UBQ-activ_enz_E1"/>
</dbReference>
<dbReference type="InterPro" id="IPR000011">
    <property type="entry name" value="UBQ/SUMO-activ_enz_E1-like"/>
</dbReference>
<dbReference type="NCBIfam" id="TIGR01408">
    <property type="entry name" value="Ube1"/>
    <property type="match status" value="1"/>
</dbReference>
<dbReference type="PANTHER" id="PTHR10953:SF162">
    <property type="entry name" value="SUMO-ACTIVATING ENZYME SUBUNIT 1"/>
    <property type="match status" value="1"/>
</dbReference>
<dbReference type="PANTHER" id="PTHR10953">
    <property type="entry name" value="UBIQUITIN-ACTIVATING ENZYME E1"/>
    <property type="match status" value="1"/>
</dbReference>
<dbReference type="Pfam" id="PF16191">
    <property type="entry name" value="E1_4HB"/>
    <property type="match status" value="1"/>
</dbReference>
<dbReference type="Pfam" id="PF16190">
    <property type="entry name" value="E1_FCCH"/>
    <property type="match status" value="1"/>
</dbReference>
<dbReference type="Pfam" id="PF09358">
    <property type="entry name" value="E1_UFD"/>
    <property type="match status" value="1"/>
</dbReference>
<dbReference type="Pfam" id="PF00899">
    <property type="entry name" value="ThiF"/>
    <property type="match status" value="2"/>
</dbReference>
<dbReference type="Pfam" id="PF10585">
    <property type="entry name" value="UBA_E1_SCCH"/>
    <property type="match status" value="1"/>
</dbReference>
<dbReference type="PRINTS" id="PR01849">
    <property type="entry name" value="UBIQUITINACT"/>
</dbReference>
<dbReference type="SMART" id="SM00985">
    <property type="entry name" value="UBA_e1_C"/>
    <property type="match status" value="1"/>
</dbReference>
<dbReference type="SUPFAM" id="SSF69572">
    <property type="entry name" value="Activating enzymes of the ubiquitin-like proteins"/>
    <property type="match status" value="2"/>
</dbReference>
<proteinExistence type="evidence at protein level"/>
<sequence length="1052" mass="117970">MEGSEPVAAHQGEEASCSSWGTGSTNKNLPIMSTASVEIDDALYSRQRYVLGDTAMQKMAKSHVFLSGMGGLGLEIAKNLVLAGIKAVTIHDTEKCQAWDLGTNFFLSEDDVVNKRNRAEAVLKHIAELNPYVHVTSSSVPFNETTDLSFLDKYQCVVLTEMKLPLQKKINDFCRSQCPPIKFISADVHGIWSRLFCDFGDEFEVLDTTGEEPKEIFISNITQANPGIVTCLENHPHKLETGQFLTFREINGMTGLNGSIQQITVISPFSFSIGDTTELEPYLHGGIAVQVKTPKTVFFESLERQLKHPKCLIVDFSNPEAPLEIHTAMLALDQFQEKYSRKPNVGCQQDSEELLKLATSISETLEEKPDVNADIVHWLSWTAQGFLSPLAAAVGGVASQEVLKAVTGKFSPLCQWLYLEAADIVESLGKPECEEFLPRGDRYDALRACIGDTLCQKLQNLNIFLVGCGAIGCEMLKNFALLGVGTSKEKGMITVTDPDLIEKSNLNRQFLFRPHHIQKPKSYTAADATLKINSQIKIDAHLNKVCPTTETIYNDEFYTKQDVIITALDNVEARRYVDSRCLANLRPLLDSGTMGTKGHTEVIVPHLTESYNSHRDPPEEEIPFCTLKSFPAAIEHTIQWARDKFESSFSHKPSLFNKFWQTYSSAEEVLQKIQSGHSLEGCFQVIKLLSRRPRNWSQCVELARLKFEKYFNHKALQLLHCFPLDIRLKDGSLFWQSPKRPPSPIKFDLNEPLHLSFLQNAAKLYATVYCIPFAEEDLSADALLNILSEVKIQEFKPSNKVVQTDETARKPDHVPISSEDERNAIFQLEKAILSNEATKSDLQMAVLSFEKDDDHNGHIDFITAASNLRAKMYSIEPADRFKTKRIAGKIIPAIATTTATVSGLVALEMIKVTGGYPFEAYKNCFLNLAIPIVVFTETTEVRKTKIRNGISFTIWDRWTVHGKEDFTLLDFINAVKEKYGIEPTMVVQGVKMLYVPVMPGHAKRLKLTMHKLVKPTTEKKYVDLTVSFAPDIDGDEDLPGPPVRYYFSHDTD</sequence>
<gene>
    <name type="primary">UBA6</name>
    <name type="synonym">MOP4</name>
    <name type="synonym">UBE1L2</name>
</gene>
<feature type="chain" id="PRO_0000277797" description="Ubiquitin-like modifier-activating enzyme 6">
    <location>
        <begin position="1"/>
        <end position="1052"/>
    </location>
</feature>
<feature type="region of interest" description="Disordered" evidence="4">
    <location>
        <begin position="1"/>
        <end position="21"/>
    </location>
</feature>
<feature type="active site" description="Glycyl thioester intermediate" evidence="3">
    <location>
        <position position="625"/>
    </location>
</feature>
<feature type="binding site" evidence="11 18">
    <location>
        <position position="46"/>
    </location>
    <ligand>
        <name>ATP</name>
        <dbReference type="ChEBI" id="CHEBI:30616"/>
    </ligand>
</feature>
<feature type="binding site" evidence="17 20">
    <location>
        <position position="470"/>
    </location>
    <ligand>
        <name>ATP</name>
        <dbReference type="ChEBI" id="CHEBI:30616"/>
    </ligand>
</feature>
<feature type="binding site" evidence="11 17 18 20">
    <location>
        <position position="497"/>
    </location>
    <ligand>
        <name>ATP</name>
        <dbReference type="ChEBI" id="CHEBI:30616"/>
    </ligand>
</feature>
<feature type="binding site" evidence="1">
    <location>
        <position position="499"/>
    </location>
    <ligand>
        <name>Mg(2+)</name>
        <dbReference type="ChEBI" id="CHEBI:18420"/>
        <label>1</label>
    </ligand>
</feature>
<feature type="binding site" evidence="1">
    <location>
        <position position="502"/>
    </location>
    <ligand>
        <name>Mg(2+)</name>
        <dbReference type="ChEBI" id="CHEBI:18420"/>
        <label>1</label>
    </ligand>
</feature>
<feature type="binding site" evidence="11 18">
    <location>
        <position position="505"/>
    </location>
    <ligand>
        <name>ATP</name>
        <dbReference type="ChEBI" id="CHEBI:30616"/>
    </ligand>
</feature>
<feature type="binding site" evidence="11 17 18 20">
    <location>
        <position position="508"/>
    </location>
    <ligand>
        <name>ATP</name>
        <dbReference type="ChEBI" id="CHEBI:30616"/>
    </ligand>
</feature>
<feature type="binding site" evidence="17 20">
    <location>
        <position position="509"/>
    </location>
    <ligand>
        <name>ATP</name>
        <dbReference type="ChEBI" id="CHEBI:30616"/>
    </ligand>
</feature>
<feature type="binding site" evidence="11 17 18 20">
    <location>
        <position position="521"/>
    </location>
    <ligand>
        <name>ATP</name>
        <dbReference type="ChEBI" id="CHEBI:30616"/>
    </ligand>
</feature>
<feature type="binding site" evidence="11 17 18 20">
    <location>
        <position position="545"/>
    </location>
    <ligand>
        <name>ATP</name>
        <dbReference type="ChEBI" id="CHEBI:30616"/>
    </ligand>
</feature>
<feature type="binding site" evidence="11 18">
    <location>
        <position position="569"/>
    </location>
    <ligand>
        <name>Mg(2+)</name>
        <dbReference type="ChEBI" id="CHEBI:18420"/>
        <label>2</label>
    </ligand>
</feature>
<feature type="binding site" evidence="11 17 18 20">
    <location>
        <position position="570"/>
    </location>
    <ligand>
        <name>ATP</name>
        <dbReference type="ChEBI" id="CHEBI:30616"/>
    </ligand>
</feature>
<feature type="modified residue" description="N-acetylmethionine" evidence="21">
    <location>
        <position position="1"/>
    </location>
</feature>
<feature type="modified residue" description="Phosphothreonine" evidence="23">
    <location>
        <position position="54"/>
    </location>
</feature>
<feature type="modified residue" description="Phosphoserine" evidence="23">
    <location>
        <position position="301"/>
    </location>
</feature>
<feature type="modified residue" description="N6-acetyllysine" evidence="22">
    <location>
        <position position="544"/>
    </location>
</feature>
<feature type="modified residue" description="N6-acetyllysine" evidence="2">
    <location>
        <position position="729"/>
    </location>
</feature>
<feature type="modified residue" description="Phosphoserine" evidence="23">
    <location>
        <position position="737"/>
    </location>
</feature>
<feature type="splice variant" id="VSP_023083" description="In isoform 2." evidence="14">
    <location>
        <begin position="1"/>
        <end position="474"/>
    </location>
</feature>
<feature type="splice variant" id="VSP_023084" description="In isoform 4." evidence="13">
    <original>APLEIHTAMLALDQFQEKYS</original>
    <variation>VNKHFAGLREAAESEMRISE</variation>
    <location>
        <begin position="321"/>
        <end position="340"/>
    </location>
</feature>
<feature type="splice variant" id="VSP_023085" description="In isoform 4." evidence="13">
    <location>
        <begin position="341"/>
        <end position="1052"/>
    </location>
</feature>
<feature type="splice variant" id="VSP_023086" description="In isoform 3." evidence="15">
    <original>PDVNADIVHWLSWTAQGFLSP</original>
    <variation>VTIEIYGCPNICLLIHKCSVY</variation>
    <location>
        <begin position="369"/>
        <end position="389"/>
    </location>
</feature>
<feature type="splice variant" id="VSP_023087" description="In isoform 3." evidence="15">
    <location>
        <begin position="390"/>
        <end position="1052"/>
    </location>
</feature>
<feature type="sequence variant" id="VAR_030594" description="In dbSNP:rs10010188." evidence="5 7 9">
    <original>A</original>
    <variation>T</variation>
    <location>
        <position position="224"/>
    </location>
</feature>
<feature type="mutagenesis site" description="Impairs ubiquitin activation and UBD/FAT10 conjugation." evidence="11">
    <original>F</original>
    <variation>A</variation>
    <location>
        <position position="316"/>
    </location>
</feature>
<feature type="mutagenesis site" description="Impairs UBD/FAT10 conjugation; when associated with R-324 and R-370." evidence="11">
    <original>E</original>
    <variation>K</variation>
    <location>
        <position position="320"/>
    </location>
</feature>
<feature type="mutagenesis site" description="Impairs UBD/FAT10 conjugation; when associated with K-320 and R-370." evidence="11">
    <original>E</original>
    <variation>R</variation>
    <location>
        <position position="324"/>
    </location>
</feature>
<feature type="mutagenesis site" description="Impairs UBD/FAT10 conjugation; when associated with K-320 and R-324." evidence="11">
    <original>D</original>
    <variation>R</variation>
    <location>
        <position position="370"/>
    </location>
</feature>
<feature type="mutagenesis site" description="Impairs ubiquitin activation." evidence="11">
    <original>E</original>
    <variation>Q</variation>
    <location>
        <position position="601"/>
    </location>
</feature>
<feature type="mutagenesis site" description="Impairs ubiquitin activation." evidence="11">
    <original>D</original>
    <variation>A</variation>
    <location>
        <position position="616"/>
    </location>
</feature>
<feature type="mutagenesis site" description="Impairs ubiquitin activation." evidence="7 8">
    <original>C</original>
    <variation>A</variation>
    <variation>S</variation>
    <location>
        <position position="625"/>
    </location>
</feature>
<feature type="mutagenesis site" description="Impairs ubiquitin activation and UBD/FAT10 conjugation." evidence="11">
    <original>V</original>
    <variation>A</variation>
    <location>
        <position position="934"/>
    </location>
</feature>
<feature type="sequence conflict" description="In Ref. 5; CAD89908." evidence="16" ref="5">
    <original>E</original>
    <variation>K</variation>
    <location>
        <position position="14"/>
    </location>
</feature>
<feature type="sequence conflict" description="In Ref. 5; CAD89908." evidence="16" ref="5">
    <original>V</original>
    <variation>A</variation>
    <location>
        <position position="140"/>
    </location>
</feature>
<feature type="sequence conflict" description="In Ref. 4; BAC04463." evidence="16" ref="4">
    <original>C</original>
    <variation>Y</variation>
    <location>
        <position position="197"/>
    </location>
</feature>
<feature type="sequence conflict" description="In Ref. 5; CAD89959." evidence="16" ref="5">
    <original>N</original>
    <variation>D</variation>
    <location>
        <position position="234"/>
    </location>
</feature>
<feature type="sequence conflict" description="In Ref. 4; BAC04463." evidence="16" ref="4">
    <original>V</original>
    <variation>A</variation>
    <location>
        <position position="297"/>
    </location>
</feature>
<feature type="sequence conflict" description="In Ref. 1; AAQ63403." evidence="16" ref="1">
    <original>F</original>
    <variation>V</variation>
    <location>
        <position position="645"/>
    </location>
</feature>
<feature type="sequence conflict" description="In Ref. 4; BAA91824." evidence="16" ref="4">
    <original>Q</original>
    <variation>H</variation>
    <location>
        <position position="803"/>
    </location>
</feature>
<feature type="sequence conflict" description="In Ref. 5; CAD89959." evidence="16" ref="5">
    <original>E</original>
    <variation>G</variation>
    <location>
        <position position="821"/>
    </location>
</feature>
<feature type="sequence conflict" description="In Ref. 5; CAD89908." evidence="16" ref="5">
    <original>L</original>
    <variation>P</variation>
    <location>
        <position position="868"/>
    </location>
</feature>
<feature type="sequence conflict" description="In Ref. 1; AAQ63403." evidence="16" ref="1">
    <original>V</original>
    <variation>G</variation>
    <location>
        <position position="905"/>
    </location>
</feature>
<feature type="sequence conflict" description="In Ref. 5; CAD89959." evidence="16" ref="5">
    <original>M</original>
    <variation>K</variation>
    <location>
        <position position="909"/>
    </location>
</feature>
<feature type="sequence conflict" description="In Ref. 3; BAB19785." evidence="16" ref="3">
    <original>A</original>
    <variation>V</variation>
    <location>
        <position position="920"/>
    </location>
</feature>
<feature type="strand" evidence="26">
    <location>
        <begin position="42"/>
        <end position="44"/>
    </location>
</feature>
<feature type="helix" evidence="26">
    <location>
        <begin position="45"/>
        <end position="51"/>
    </location>
</feature>
<feature type="helix" evidence="26">
    <location>
        <begin position="53"/>
        <end position="59"/>
    </location>
</feature>
<feature type="strand" evidence="26">
    <location>
        <begin position="63"/>
        <end position="67"/>
    </location>
</feature>
<feature type="helix" evidence="26">
    <location>
        <begin position="71"/>
        <end position="83"/>
    </location>
</feature>
<feature type="strand" evidence="26">
    <location>
        <begin position="86"/>
        <end position="91"/>
    </location>
</feature>
<feature type="helix" evidence="26">
    <location>
        <begin position="98"/>
        <end position="102"/>
    </location>
</feature>
<feature type="helix" evidence="26">
    <location>
        <begin position="109"/>
        <end position="113"/>
    </location>
</feature>
<feature type="helix" evidence="26">
    <location>
        <begin position="118"/>
        <end position="127"/>
    </location>
</feature>
<feature type="strand" evidence="26">
    <location>
        <begin position="133"/>
        <end position="138"/>
    </location>
</feature>
<feature type="strand" evidence="24">
    <location>
        <begin position="144"/>
        <end position="146"/>
    </location>
</feature>
<feature type="helix" evidence="26">
    <location>
        <begin position="148"/>
        <end position="153"/>
    </location>
</feature>
<feature type="strand" evidence="26">
    <location>
        <begin position="155"/>
        <end position="159"/>
    </location>
</feature>
<feature type="helix" evidence="26">
    <location>
        <begin position="164"/>
        <end position="175"/>
    </location>
</feature>
<feature type="strand" evidence="26">
    <location>
        <begin position="177"/>
        <end position="179"/>
    </location>
</feature>
<feature type="strand" evidence="26">
    <location>
        <begin position="182"/>
        <end position="190"/>
    </location>
</feature>
<feature type="strand" evidence="26">
    <location>
        <begin position="192"/>
        <end position="198"/>
    </location>
</feature>
<feature type="strand" evidence="26">
    <location>
        <begin position="201"/>
        <end position="209"/>
    </location>
</feature>
<feature type="strand" evidence="26">
    <location>
        <begin position="215"/>
        <end position="221"/>
    </location>
</feature>
<feature type="strand" evidence="26">
    <location>
        <begin position="224"/>
        <end position="226"/>
    </location>
</feature>
<feature type="strand" evidence="26">
    <location>
        <begin position="228"/>
        <end position="231"/>
    </location>
</feature>
<feature type="strand" evidence="25">
    <location>
        <begin position="233"/>
        <end position="235"/>
    </location>
</feature>
<feature type="strand" evidence="26">
    <location>
        <begin position="244"/>
        <end position="248"/>
    </location>
</feature>
<feature type="helix" evidence="24">
    <location>
        <begin position="254"/>
        <end position="256"/>
    </location>
</feature>
<feature type="strand" evidence="26">
    <location>
        <begin position="260"/>
        <end position="262"/>
    </location>
</feature>
<feature type="strand" evidence="26">
    <location>
        <begin position="264"/>
        <end position="267"/>
    </location>
</feature>
<feature type="strand" evidence="26">
    <location>
        <begin position="270"/>
        <end position="272"/>
    </location>
</feature>
<feature type="strand" evidence="24">
    <location>
        <begin position="277"/>
        <end position="279"/>
    </location>
</feature>
<feature type="strand" evidence="26">
    <location>
        <begin position="287"/>
        <end position="291"/>
    </location>
</feature>
<feature type="strand" evidence="26">
    <location>
        <begin position="295"/>
        <end position="298"/>
    </location>
</feature>
<feature type="helix" evidence="26">
    <location>
        <begin position="302"/>
        <end position="307"/>
    </location>
</feature>
<feature type="strand" evidence="24">
    <location>
        <begin position="316"/>
        <end position="320"/>
    </location>
</feature>
<feature type="helix" evidence="26">
    <location>
        <begin position="321"/>
        <end position="339"/>
    </location>
</feature>
<feature type="helix" evidence="26">
    <location>
        <begin position="348"/>
        <end position="364"/>
    </location>
</feature>
<feature type="strand" evidence="26">
    <location>
        <begin position="365"/>
        <end position="367"/>
    </location>
</feature>
<feature type="helix" evidence="26">
    <location>
        <begin position="373"/>
        <end position="382"/>
    </location>
</feature>
<feature type="helix" evidence="26">
    <location>
        <begin position="388"/>
        <end position="407"/>
    </location>
</feature>
<feature type="strand" evidence="26">
    <location>
        <begin position="415"/>
        <end position="417"/>
    </location>
</feature>
<feature type="helix" evidence="26">
    <location>
        <begin position="422"/>
        <end position="424"/>
    </location>
</feature>
<feature type="helix" evidence="26">
    <location>
        <begin position="426"/>
        <end position="428"/>
    </location>
</feature>
<feature type="helix" evidence="26">
    <location>
        <begin position="433"/>
        <end position="436"/>
    </location>
</feature>
<feature type="helix" evidence="26">
    <location>
        <begin position="444"/>
        <end position="450"/>
    </location>
</feature>
<feature type="helix" evidence="26">
    <location>
        <begin position="452"/>
        <end position="459"/>
    </location>
</feature>
<feature type="strand" evidence="26">
    <location>
        <begin position="462"/>
        <end position="466"/>
    </location>
</feature>
<feature type="helix" evidence="26">
    <location>
        <begin position="470"/>
        <end position="482"/>
    </location>
</feature>
<feature type="turn" evidence="26">
    <location>
        <begin position="483"/>
        <end position="485"/>
    </location>
</feature>
<feature type="strand" evidence="26">
    <location>
        <begin position="488"/>
        <end position="490"/>
    </location>
</feature>
<feature type="strand" evidence="26">
    <location>
        <begin position="492"/>
        <end position="496"/>
    </location>
</feature>
<feature type="turn" evidence="26">
    <location>
        <begin position="506"/>
        <end position="508"/>
    </location>
</feature>
<feature type="helix" evidence="26">
    <location>
        <begin position="514"/>
        <end position="516"/>
    </location>
</feature>
<feature type="helix" evidence="26">
    <location>
        <begin position="521"/>
        <end position="532"/>
    </location>
</feature>
<feature type="strand" evidence="26">
    <location>
        <begin position="538"/>
        <end position="541"/>
    </location>
</feature>
<feature type="helix" evidence="26">
    <location>
        <begin position="547"/>
        <end position="549"/>
    </location>
</feature>
<feature type="turn" evidence="26">
    <location>
        <begin position="550"/>
        <end position="552"/>
    </location>
</feature>
<feature type="helix" evidence="26">
    <location>
        <begin position="555"/>
        <end position="560"/>
    </location>
</feature>
<feature type="strand" evidence="26">
    <location>
        <begin position="562"/>
        <end position="566"/>
    </location>
</feature>
<feature type="helix" evidence="26">
    <location>
        <begin position="571"/>
        <end position="583"/>
    </location>
</feature>
<feature type="strand" evidence="26">
    <location>
        <begin position="588"/>
        <end position="594"/>
    </location>
</feature>
<feature type="strand" evidence="26">
    <location>
        <begin position="597"/>
        <end position="603"/>
    </location>
</feature>
<feature type="turn" evidence="26">
    <location>
        <begin position="605"/>
        <end position="607"/>
    </location>
</feature>
<feature type="helix" evidence="26">
    <location>
        <begin position="611"/>
        <end position="613"/>
    </location>
</feature>
<feature type="helix" evidence="26">
    <location>
        <begin position="624"/>
        <end position="628"/>
    </location>
</feature>
<feature type="helix" evidence="26">
    <location>
        <begin position="634"/>
        <end position="649"/>
    </location>
</feature>
<feature type="helix" evidence="26">
    <location>
        <begin position="651"/>
        <end position="663"/>
    </location>
</feature>
<feature type="helix" evidence="26">
    <location>
        <begin position="666"/>
        <end position="674"/>
    </location>
</feature>
<feature type="helix" evidence="26">
    <location>
        <begin position="682"/>
        <end position="690"/>
    </location>
</feature>
<feature type="helix" evidence="26">
    <location>
        <begin position="696"/>
        <end position="711"/>
    </location>
</feature>
<feature type="helix" evidence="26">
    <location>
        <begin position="713"/>
        <end position="721"/>
    </location>
</feature>
<feature type="strand" evidence="26">
    <location>
        <begin position="733"/>
        <end position="735"/>
    </location>
</feature>
<feature type="helix" evidence="26">
    <location>
        <begin position="752"/>
        <end position="768"/>
    </location>
</feature>
<feature type="helix" evidence="26">
    <location>
        <begin position="775"/>
        <end position="778"/>
    </location>
</feature>
<feature type="helix" evidence="26">
    <location>
        <begin position="780"/>
        <end position="788"/>
    </location>
</feature>
<feature type="helix" evidence="26">
    <location>
        <begin position="818"/>
        <end position="833"/>
    </location>
</feature>
<feature type="helix" evidence="26">
    <location>
        <begin position="840"/>
        <end position="842"/>
    </location>
</feature>
<feature type="helix" evidence="26">
    <location>
        <begin position="858"/>
        <end position="872"/>
    </location>
</feature>
<feature type="helix" evidence="26">
    <location>
        <begin position="880"/>
        <end position="887"/>
    </location>
</feature>
<feature type="helix" evidence="26">
    <location>
        <begin position="895"/>
        <end position="913"/>
    </location>
</feature>
<feature type="helix" evidence="26">
    <location>
        <begin position="918"/>
        <end position="920"/>
    </location>
</feature>
<feature type="strand" evidence="26">
    <location>
        <begin position="923"/>
        <end position="927"/>
    </location>
</feature>
<feature type="turn" evidence="26">
    <location>
        <begin position="928"/>
        <end position="931"/>
    </location>
</feature>
<feature type="strand" evidence="26">
    <location>
        <begin position="932"/>
        <end position="936"/>
    </location>
</feature>
<feature type="strand" evidence="26">
    <location>
        <begin position="944"/>
        <end position="947"/>
    </location>
</feature>
<feature type="strand" evidence="26">
    <location>
        <begin position="950"/>
        <end position="952"/>
    </location>
</feature>
<feature type="strand" evidence="26">
    <location>
        <begin position="958"/>
        <end position="961"/>
    </location>
</feature>
<feature type="helix" evidence="26">
    <location>
        <begin position="968"/>
        <end position="979"/>
    </location>
</feature>
<feature type="strand" evidence="26">
    <location>
        <begin position="984"/>
        <end position="988"/>
    </location>
</feature>
<feature type="strand" evidence="26">
    <location>
        <begin position="991"/>
        <end position="994"/>
    </location>
</feature>
<feature type="strand" evidence="24">
    <location>
        <begin position="996"/>
        <end position="998"/>
    </location>
</feature>
<feature type="helix" evidence="26">
    <location>
        <begin position="1001"/>
        <end position="1006"/>
    </location>
</feature>
<feature type="helix" evidence="26">
    <location>
        <begin position="1009"/>
        <end position="1013"/>
    </location>
</feature>
<feature type="strand" evidence="26">
    <location>
        <begin position="1017"/>
        <end position="1028"/>
    </location>
</feature>
<feature type="strand" evidence="24">
    <location>
        <begin position="1032"/>
        <end position="1034"/>
    </location>
</feature>
<feature type="strand" evidence="26">
    <location>
        <begin position="1038"/>
        <end position="1048"/>
    </location>
</feature>
<organism>
    <name type="scientific">Homo sapiens</name>
    <name type="common">Human</name>
    <dbReference type="NCBI Taxonomy" id="9606"/>
    <lineage>
        <taxon>Eukaryota</taxon>
        <taxon>Metazoa</taxon>
        <taxon>Chordata</taxon>
        <taxon>Craniata</taxon>
        <taxon>Vertebrata</taxon>
        <taxon>Euteleostomi</taxon>
        <taxon>Mammalia</taxon>
        <taxon>Eutheria</taxon>
        <taxon>Euarchontoglires</taxon>
        <taxon>Primates</taxon>
        <taxon>Haplorrhini</taxon>
        <taxon>Catarrhini</taxon>
        <taxon>Hominidae</taxon>
        <taxon>Homo</taxon>
    </lineage>
</organism>
<name>UBA6_HUMAN</name>
<reference key="1">
    <citation type="journal article" date="2004" name="Acta Biochim. Biophys. Sin.">
        <title>Identification and characteristics of a novel E1 like gene nUBE1L in human testis.</title>
        <authorList>
            <person name="Zhu H."/>
            <person name="Zhou Z.-M."/>
            <person name="Huo R."/>
            <person name="Huang X.-Y."/>
            <person name="Lu L."/>
            <person name="Lin M."/>
            <person name="Wang L.-R."/>
            <person name="Zhou Y.-D."/>
            <person name="Li J.-M."/>
            <person name="Sha J.-H."/>
        </authorList>
    </citation>
    <scope>NUCLEOTIDE SEQUENCE [MRNA] (ISOFORM 2)</scope>
    <scope>TISSUE SPECIFICITY</scope>
    <scope>FUNCTION</scope>
</reference>
<reference key="2">
    <citation type="journal article" date="2007" name="Nature">
        <title>Dual E1 activation systems for ubiquitin differentially regulate E2 enzyme charging.</title>
        <authorList>
            <person name="Jin J."/>
            <person name="Li X."/>
            <person name="Gygi S.P."/>
            <person name="Harper J.W."/>
        </authorList>
    </citation>
    <scope>NUCLEOTIDE SEQUENCE [MRNA] (ISOFORM 1)</scope>
    <scope>VARIANT THR-224</scope>
    <scope>FUNCTION</scope>
    <scope>TISSUE SPECIFICITY</scope>
    <scope>MUTAGENESIS OF CYS-625</scope>
</reference>
<reference key="3">
    <citation type="submission" date="1998-05" db="EMBL/GenBank/DDBJ databases">
        <title>Molecular and biological characterization of a new ubiquitin-activating enzyme E1 like protein, MOP-4 which is highly expressed in human monocytes.</title>
        <authorList>
            <person name="Takayama K."/>
            <person name="Fujii Y."/>
            <person name="Ukai Y."/>
            <person name="Yoshimoto M."/>
        </authorList>
    </citation>
    <scope>NUCLEOTIDE SEQUENCE [MRNA] (ISOFORM 1)</scope>
    <source>
        <tissue>Blood</tissue>
    </source>
</reference>
<reference key="4">
    <citation type="journal article" date="2004" name="Nat. Genet.">
        <title>Complete sequencing and characterization of 21,243 full-length human cDNAs.</title>
        <authorList>
            <person name="Ota T."/>
            <person name="Suzuki Y."/>
            <person name="Nishikawa T."/>
            <person name="Otsuki T."/>
            <person name="Sugiyama T."/>
            <person name="Irie R."/>
            <person name="Wakamatsu A."/>
            <person name="Hayashi K."/>
            <person name="Sato H."/>
            <person name="Nagai K."/>
            <person name="Kimura K."/>
            <person name="Makita H."/>
            <person name="Sekine M."/>
            <person name="Obayashi M."/>
            <person name="Nishi T."/>
            <person name="Shibahara T."/>
            <person name="Tanaka T."/>
            <person name="Ishii S."/>
            <person name="Yamamoto J."/>
            <person name="Saito K."/>
            <person name="Kawai Y."/>
            <person name="Isono Y."/>
            <person name="Nakamura Y."/>
            <person name="Nagahari K."/>
            <person name="Murakami K."/>
            <person name="Yasuda T."/>
            <person name="Iwayanagi T."/>
            <person name="Wagatsuma M."/>
            <person name="Shiratori A."/>
            <person name="Sudo H."/>
            <person name="Hosoiri T."/>
            <person name="Kaku Y."/>
            <person name="Kodaira H."/>
            <person name="Kondo H."/>
            <person name="Sugawara M."/>
            <person name="Takahashi M."/>
            <person name="Kanda K."/>
            <person name="Yokoi T."/>
            <person name="Furuya T."/>
            <person name="Kikkawa E."/>
            <person name="Omura Y."/>
            <person name="Abe K."/>
            <person name="Kamihara K."/>
            <person name="Katsuta N."/>
            <person name="Sato K."/>
            <person name="Tanikawa M."/>
            <person name="Yamazaki M."/>
            <person name="Ninomiya K."/>
            <person name="Ishibashi T."/>
            <person name="Yamashita H."/>
            <person name="Murakawa K."/>
            <person name="Fujimori K."/>
            <person name="Tanai H."/>
            <person name="Kimata M."/>
            <person name="Watanabe M."/>
            <person name="Hiraoka S."/>
            <person name="Chiba Y."/>
            <person name="Ishida S."/>
            <person name="Ono Y."/>
            <person name="Takiguchi S."/>
            <person name="Watanabe S."/>
            <person name="Yosida M."/>
            <person name="Hotuta T."/>
            <person name="Kusano J."/>
            <person name="Kanehori K."/>
            <person name="Takahashi-Fujii A."/>
            <person name="Hara H."/>
            <person name="Tanase T.-O."/>
            <person name="Nomura Y."/>
            <person name="Togiya S."/>
            <person name="Komai F."/>
            <person name="Hara R."/>
            <person name="Takeuchi K."/>
            <person name="Arita M."/>
            <person name="Imose N."/>
            <person name="Musashino K."/>
            <person name="Yuuki H."/>
            <person name="Oshima A."/>
            <person name="Sasaki N."/>
            <person name="Aotsuka S."/>
            <person name="Yoshikawa Y."/>
            <person name="Matsunawa H."/>
            <person name="Ichihara T."/>
            <person name="Shiohata N."/>
            <person name="Sano S."/>
            <person name="Moriya S."/>
            <person name="Momiyama H."/>
            <person name="Satoh N."/>
            <person name="Takami S."/>
            <person name="Terashima Y."/>
            <person name="Suzuki O."/>
            <person name="Nakagawa S."/>
            <person name="Senoh A."/>
            <person name="Mizoguchi H."/>
            <person name="Goto Y."/>
            <person name="Shimizu F."/>
            <person name="Wakebe H."/>
            <person name="Hishigaki H."/>
            <person name="Watanabe T."/>
            <person name="Sugiyama A."/>
            <person name="Takemoto M."/>
            <person name="Kawakami B."/>
            <person name="Yamazaki M."/>
            <person name="Watanabe K."/>
            <person name="Kumagai A."/>
            <person name="Itakura S."/>
            <person name="Fukuzumi Y."/>
            <person name="Fujimori Y."/>
            <person name="Komiyama M."/>
            <person name="Tashiro H."/>
            <person name="Tanigami A."/>
            <person name="Fujiwara T."/>
            <person name="Ono T."/>
            <person name="Yamada K."/>
            <person name="Fujii Y."/>
            <person name="Ozaki K."/>
            <person name="Hirao M."/>
            <person name="Ohmori Y."/>
            <person name="Kawabata A."/>
            <person name="Hikiji T."/>
            <person name="Kobatake N."/>
            <person name="Inagaki H."/>
            <person name="Ikema Y."/>
            <person name="Okamoto S."/>
            <person name="Okitani R."/>
            <person name="Kawakami T."/>
            <person name="Noguchi S."/>
            <person name="Itoh T."/>
            <person name="Shigeta K."/>
            <person name="Senba T."/>
            <person name="Matsumura K."/>
            <person name="Nakajima Y."/>
            <person name="Mizuno T."/>
            <person name="Morinaga M."/>
            <person name="Sasaki M."/>
            <person name="Togashi T."/>
            <person name="Oyama M."/>
            <person name="Hata H."/>
            <person name="Watanabe M."/>
            <person name="Komatsu T."/>
            <person name="Mizushima-Sugano J."/>
            <person name="Satoh T."/>
            <person name="Shirai Y."/>
            <person name="Takahashi Y."/>
            <person name="Nakagawa K."/>
            <person name="Okumura K."/>
            <person name="Nagase T."/>
            <person name="Nomura N."/>
            <person name="Kikuchi H."/>
            <person name="Masuho Y."/>
            <person name="Yamashita R."/>
            <person name="Nakai K."/>
            <person name="Yada T."/>
            <person name="Nakamura Y."/>
            <person name="Ohara O."/>
            <person name="Isogai T."/>
            <person name="Sugano S."/>
        </authorList>
    </citation>
    <scope>NUCLEOTIDE SEQUENCE [LARGE SCALE MRNA] (ISOFORMS 1 AND 4)</scope>
    <scope>VARIANT THR-224</scope>
    <source>
        <tissue>Hippocampus</tissue>
    </source>
</reference>
<reference key="5">
    <citation type="journal article" date="2007" name="BMC Genomics">
        <title>The full-ORF clone resource of the German cDNA consortium.</title>
        <authorList>
            <person name="Bechtel S."/>
            <person name="Rosenfelder H."/>
            <person name="Duda A."/>
            <person name="Schmidt C.P."/>
            <person name="Ernst U."/>
            <person name="Wellenreuther R."/>
            <person name="Mehrle A."/>
            <person name="Schuster C."/>
            <person name="Bahr A."/>
            <person name="Bloecker H."/>
            <person name="Heubner D."/>
            <person name="Hoerlein A."/>
            <person name="Michel G."/>
            <person name="Wedler H."/>
            <person name="Koehrer K."/>
            <person name="Ottenwaelder B."/>
            <person name="Poustka A."/>
            <person name="Wiemann S."/>
            <person name="Schupp I."/>
        </authorList>
    </citation>
    <scope>NUCLEOTIDE SEQUENCE [LARGE SCALE MRNA] (ISOFORM 1)</scope>
    <scope>VARIANT THR-224</scope>
    <source>
        <tissue>Skeletal muscle</tissue>
    </source>
</reference>
<reference key="6">
    <citation type="journal article" date="2005" name="Nature">
        <title>Generation and annotation of the DNA sequences of human chromosomes 2 and 4.</title>
        <authorList>
            <person name="Hillier L.W."/>
            <person name="Graves T.A."/>
            <person name="Fulton R.S."/>
            <person name="Fulton L.A."/>
            <person name="Pepin K.H."/>
            <person name="Minx P."/>
            <person name="Wagner-McPherson C."/>
            <person name="Layman D."/>
            <person name="Wylie K."/>
            <person name="Sekhon M."/>
            <person name="Becker M.C."/>
            <person name="Fewell G.A."/>
            <person name="Delehaunty K.D."/>
            <person name="Miner T.L."/>
            <person name="Nash W.E."/>
            <person name="Kremitzki C."/>
            <person name="Oddy L."/>
            <person name="Du H."/>
            <person name="Sun H."/>
            <person name="Bradshaw-Cordum H."/>
            <person name="Ali J."/>
            <person name="Carter J."/>
            <person name="Cordes M."/>
            <person name="Harris A."/>
            <person name="Isak A."/>
            <person name="van Brunt A."/>
            <person name="Nguyen C."/>
            <person name="Du F."/>
            <person name="Courtney L."/>
            <person name="Kalicki J."/>
            <person name="Ozersky P."/>
            <person name="Abbott S."/>
            <person name="Armstrong J."/>
            <person name="Belter E.A."/>
            <person name="Caruso L."/>
            <person name="Cedroni M."/>
            <person name="Cotton M."/>
            <person name="Davidson T."/>
            <person name="Desai A."/>
            <person name="Elliott G."/>
            <person name="Erb T."/>
            <person name="Fronick C."/>
            <person name="Gaige T."/>
            <person name="Haakenson W."/>
            <person name="Haglund K."/>
            <person name="Holmes A."/>
            <person name="Harkins R."/>
            <person name="Kim K."/>
            <person name="Kruchowski S.S."/>
            <person name="Strong C.M."/>
            <person name="Grewal N."/>
            <person name="Goyea E."/>
            <person name="Hou S."/>
            <person name="Levy A."/>
            <person name="Martinka S."/>
            <person name="Mead K."/>
            <person name="McLellan M.D."/>
            <person name="Meyer R."/>
            <person name="Randall-Maher J."/>
            <person name="Tomlinson C."/>
            <person name="Dauphin-Kohlberg S."/>
            <person name="Kozlowicz-Reilly A."/>
            <person name="Shah N."/>
            <person name="Swearengen-Shahid S."/>
            <person name="Snider J."/>
            <person name="Strong J.T."/>
            <person name="Thompson J."/>
            <person name="Yoakum M."/>
            <person name="Leonard S."/>
            <person name="Pearman C."/>
            <person name="Trani L."/>
            <person name="Radionenko M."/>
            <person name="Waligorski J.E."/>
            <person name="Wang C."/>
            <person name="Rock S.M."/>
            <person name="Tin-Wollam A.-M."/>
            <person name="Maupin R."/>
            <person name="Latreille P."/>
            <person name="Wendl M.C."/>
            <person name="Yang S.-P."/>
            <person name="Pohl C."/>
            <person name="Wallis J.W."/>
            <person name="Spieth J."/>
            <person name="Bieri T.A."/>
            <person name="Berkowicz N."/>
            <person name="Nelson J.O."/>
            <person name="Osborne J."/>
            <person name="Ding L."/>
            <person name="Meyer R."/>
            <person name="Sabo A."/>
            <person name="Shotland Y."/>
            <person name="Sinha P."/>
            <person name="Wohldmann P.E."/>
            <person name="Cook L.L."/>
            <person name="Hickenbotham M.T."/>
            <person name="Eldred J."/>
            <person name="Williams D."/>
            <person name="Jones T.A."/>
            <person name="She X."/>
            <person name="Ciccarelli F.D."/>
            <person name="Izaurralde E."/>
            <person name="Taylor J."/>
            <person name="Schmutz J."/>
            <person name="Myers R.M."/>
            <person name="Cox D.R."/>
            <person name="Huang X."/>
            <person name="McPherson J.D."/>
            <person name="Mardis E.R."/>
            <person name="Clifton S.W."/>
            <person name="Warren W.C."/>
            <person name="Chinwalla A.T."/>
            <person name="Eddy S.R."/>
            <person name="Marra M.A."/>
            <person name="Ovcharenko I."/>
            <person name="Furey T.S."/>
            <person name="Miller W."/>
            <person name="Eichler E.E."/>
            <person name="Bork P."/>
            <person name="Suyama M."/>
            <person name="Torrents D."/>
            <person name="Waterston R.H."/>
            <person name="Wilson R.K."/>
        </authorList>
    </citation>
    <scope>NUCLEOTIDE SEQUENCE [LARGE SCALE GENOMIC DNA]</scope>
</reference>
<reference key="7">
    <citation type="journal article" date="2004" name="Genome Res.">
        <title>The status, quality, and expansion of the NIH full-length cDNA project: the Mammalian Gene Collection (MGC).</title>
        <authorList>
            <consortium name="The MGC Project Team"/>
        </authorList>
    </citation>
    <scope>NUCLEOTIDE SEQUENCE [LARGE SCALE MRNA] (ISOFORMS 1 AND 3)</scope>
    <source>
        <tissue>Brain</tissue>
    </source>
</reference>
<reference key="8">
    <citation type="journal article" date="2007" name="Mol. Cell">
        <title>E1-L2 activates both ubiquitin and FAT10.</title>
        <authorList>
            <person name="Chiu Y.-H."/>
            <person name="Sun Q."/>
            <person name="Chen Z.J."/>
        </authorList>
    </citation>
    <scope>FUNCTION</scope>
    <scope>INTERACTION WITH UBD</scope>
    <scope>THIOESTER FORMATION</scope>
    <scope>MUTAGENESIS OF CYS-625</scope>
</reference>
<reference key="9">
    <citation type="journal article" date="2009" name="Anal. Chem.">
        <title>Lys-N and trypsin cover complementary parts of the phosphoproteome in a refined SCX-based approach.</title>
        <authorList>
            <person name="Gauci S."/>
            <person name="Helbig A.O."/>
            <person name="Slijper M."/>
            <person name="Krijgsveld J."/>
            <person name="Heck A.J."/>
            <person name="Mohammed S."/>
        </authorList>
    </citation>
    <scope>ACETYLATION [LARGE SCALE ANALYSIS] AT MET-1</scope>
    <scope>IDENTIFICATION BY MASS SPECTROMETRY [LARGE SCALE ANALYSIS]</scope>
</reference>
<reference key="10">
    <citation type="journal article" date="2009" name="Science">
        <title>Lysine acetylation targets protein complexes and co-regulates major cellular functions.</title>
        <authorList>
            <person name="Choudhary C."/>
            <person name="Kumar C."/>
            <person name="Gnad F."/>
            <person name="Nielsen M.L."/>
            <person name="Rehman M."/>
            <person name="Walther T.C."/>
            <person name="Olsen J.V."/>
            <person name="Mann M."/>
        </authorList>
    </citation>
    <scope>ACETYLATION [LARGE SCALE ANALYSIS] AT LYS-544</scope>
    <scope>IDENTIFICATION BY MASS SPECTROMETRY [LARGE SCALE ANALYSIS]</scope>
</reference>
<reference key="11">
    <citation type="journal article" date="2011" name="BMC Syst. Biol.">
        <title>Initial characterization of the human central proteome.</title>
        <authorList>
            <person name="Burkard T.R."/>
            <person name="Planyavsky M."/>
            <person name="Kaupe I."/>
            <person name="Breitwieser F.P."/>
            <person name="Buerckstuemmer T."/>
            <person name="Bennett K.L."/>
            <person name="Superti-Furga G."/>
            <person name="Colinge J."/>
        </authorList>
    </citation>
    <scope>IDENTIFICATION BY MASS SPECTROMETRY [LARGE SCALE ANALYSIS]</scope>
</reference>
<reference key="12">
    <citation type="journal article" date="2013" name="J. Proteome Res.">
        <title>Toward a comprehensive characterization of a human cancer cell phosphoproteome.</title>
        <authorList>
            <person name="Zhou H."/>
            <person name="Di Palma S."/>
            <person name="Preisinger C."/>
            <person name="Peng M."/>
            <person name="Polat A.N."/>
            <person name="Heck A.J."/>
            <person name="Mohammed S."/>
        </authorList>
    </citation>
    <scope>PHOSPHORYLATION [LARGE SCALE ANALYSIS] AT THR-54; SER-301 AND SER-737</scope>
    <scope>IDENTIFICATION BY MASS SPECTROMETRY [LARGE SCALE ANALYSIS]</scope>
    <source>
        <tissue>Erythroleukemia</tissue>
    </source>
</reference>
<reference key="13">
    <citation type="journal article" date="2014" name="J. Proteomics">
        <title>An enzyme assisted RP-RPLC approach for in-depth analysis of human liver phosphoproteome.</title>
        <authorList>
            <person name="Bian Y."/>
            <person name="Song C."/>
            <person name="Cheng K."/>
            <person name="Dong M."/>
            <person name="Wang F."/>
            <person name="Huang J."/>
            <person name="Sun D."/>
            <person name="Wang L."/>
            <person name="Ye M."/>
            <person name="Zou H."/>
        </authorList>
    </citation>
    <scope>IDENTIFICATION BY MASS SPECTROMETRY [LARGE SCALE ANALYSIS]</scope>
    <source>
        <tissue>Liver</tissue>
    </source>
</reference>
<reference key="14">
    <citation type="journal article" date="2014" name="Proc. Natl. Acad. Sci. U.S.A.">
        <title>Disruption of FAT10-MAD2 binding inhibits tumor progression.</title>
        <authorList>
            <person name="Theng S.S."/>
            <person name="Wang W."/>
            <person name="Mah W.C."/>
            <person name="Chan C."/>
            <person name="Zhuo J."/>
            <person name="Gao Y."/>
            <person name="Qin H."/>
            <person name="Lim L."/>
            <person name="Chong S.S."/>
            <person name="Song J."/>
            <person name="Lee C.G."/>
        </authorList>
    </citation>
    <scope>INTERACTION WITH UBD</scope>
</reference>
<reference evidence="18 19" key="15">
    <citation type="journal article" date="2022" name="Nat. Commun.">
        <title>Structures of UBA6 explain its dual specificity for ubiquitin and FAT10.</title>
        <authorList>
            <person name="Truongvan N."/>
            <person name="Li S."/>
            <person name="Misra M."/>
            <person name="Kuhn M."/>
            <person name="Schindelin H."/>
        </authorList>
    </citation>
    <scope>X-RAY CRYSTALLOGRAPHY (2.71 ANGSTROMS) IN COMPLEXES WITH ATP; MG(2+) AND UBD/FAT10</scope>
    <scope>FUNCTION</scope>
    <scope>CATALYTIC ACTIVITY</scope>
    <scope>PATHWAY</scope>
    <scope>MUTAGENESIS OF PHE-316; GLU-320; GLU-324; ASP-370; GLU-601; ASP-616 AND VAL-934</scope>
</reference>
<reference evidence="20" key="16">
    <citation type="journal article" date="2022" name="Nat. Commun.">
        <title>Crystal structures reveal catalytic and regulatory mechanisms of the dual-specificity ubiquitin/FAT10 E1 enzyme Uba6.</title>
        <authorList>
            <person name="Yuan L."/>
            <person name="Gao F."/>
            <person name="Lv Z."/>
            <person name="Nayak D."/>
            <person name="Nayak A."/>
            <person name="Santos Bury P.D."/>
            <person name="Cano K.E."/>
            <person name="Jia L."/>
            <person name="Oleinik N."/>
            <person name="Atilgan F.C."/>
            <person name="Ogretmen B."/>
            <person name="Williams K.M."/>
            <person name="Davies C."/>
            <person name="El Oualid F."/>
            <person name="Wasmuth E.V."/>
            <person name="Olsen S.K."/>
        </authorList>
    </citation>
    <scope>X-RAY CRYSTALLOGRAPHY (2.25 ANGSTROMS) OF 37-1052 OF MUTANT ALA-625 IN COMPLEX WITH AMP AND WHEAT UBIQUITIN</scope>
    <scope>FUNCTION</scope>
    <scope>CATALYTIC ACTIVITY</scope>
    <scope>PATHWAY</scope>
</reference>
<keyword id="KW-0002">3D-structure</keyword>
<keyword id="KW-0007">Acetylation</keyword>
<keyword id="KW-0025">Alternative splicing</keyword>
<keyword id="KW-0067">ATP-binding</keyword>
<keyword id="KW-0436">Ligase</keyword>
<keyword id="KW-0460">Magnesium</keyword>
<keyword id="KW-0479">Metal-binding</keyword>
<keyword id="KW-0547">Nucleotide-binding</keyword>
<keyword id="KW-0597">Phosphoprotein</keyword>
<keyword id="KW-1267">Proteomics identification</keyword>
<keyword id="KW-1185">Reference proteome</keyword>
<keyword id="KW-0833">Ubl conjugation pathway</keyword>
<evidence type="ECO:0000250" key="1">
    <source>
        <dbReference type="UniProtKB" id="P22515"/>
    </source>
</evidence>
<evidence type="ECO:0000250" key="2">
    <source>
        <dbReference type="UniProtKB" id="Q8C7R4"/>
    </source>
</evidence>
<evidence type="ECO:0000255" key="3">
    <source>
        <dbReference type="PROSITE-ProRule" id="PRU10132"/>
    </source>
</evidence>
<evidence type="ECO:0000256" key="4">
    <source>
        <dbReference type="SAM" id="MobiDB-lite"/>
    </source>
</evidence>
<evidence type="ECO:0000269" key="5">
    <source>
    </source>
</evidence>
<evidence type="ECO:0000269" key="6">
    <source>
    </source>
</evidence>
<evidence type="ECO:0000269" key="7">
    <source>
    </source>
</evidence>
<evidence type="ECO:0000269" key="8">
    <source>
    </source>
</evidence>
<evidence type="ECO:0000269" key="9">
    <source>
    </source>
</evidence>
<evidence type="ECO:0000269" key="10">
    <source>
    </source>
</evidence>
<evidence type="ECO:0000269" key="11">
    <source>
    </source>
</evidence>
<evidence type="ECO:0000269" key="12">
    <source>
    </source>
</evidence>
<evidence type="ECO:0000303" key="13">
    <source>
    </source>
</evidence>
<evidence type="ECO:0000303" key="14">
    <source>
    </source>
</evidence>
<evidence type="ECO:0000303" key="15">
    <source>
    </source>
</evidence>
<evidence type="ECO:0000305" key="16"/>
<evidence type="ECO:0000305" key="17">
    <source>
    </source>
</evidence>
<evidence type="ECO:0007744" key="18">
    <source>
        <dbReference type="PDB" id="7PVN"/>
    </source>
</evidence>
<evidence type="ECO:0007744" key="19">
    <source>
        <dbReference type="PDB" id="7PYV"/>
    </source>
</evidence>
<evidence type="ECO:0007744" key="20">
    <source>
        <dbReference type="PDB" id="7SOL"/>
    </source>
</evidence>
<evidence type="ECO:0007744" key="21">
    <source>
    </source>
</evidence>
<evidence type="ECO:0007744" key="22">
    <source>
    </source>
</evidence>
<evidence type="ECO:0007744" key="23">
    <source>
    </source>
</evidence>
<evidence type="ECO:0007829" key="24">
    <source>
        <dbReference type="PDB" id="7PVN"/>
    </source>
</evidence>
<evidence type="ECO:0007829" key="25">
    <source>
        <dbReference type="PDB" id="7PYV"/>
    </source>
</evidence>
<evidence type="ECO:0007829" key="26">
    <source>
        <dbReference type="PDB" id="7SOL"/>
    </source>
</evidence>
<protein>
    <recommendedName>
        <fullName>Ubiquitin-like modifier-activating enzyme 6</fullName>
        <shortName>Ubiquitin-activating enzyme 6</shortName>
        <ecNumber evidence="11 12">6.2.1.45</ecNumber>
    </recommendedName>
    <alternativeName>
        <fullName>Monocyte protein 4</fullName>
        <shortName>MOP-4</shortName>
    </alternativeName>
    <alternativeName>
        <fullName>Ubiquitin-activating enzyme E1-like protein 2</fullName>
        <shortName>E1-L2</shortName>
    </alternativeName>
</protein>
<comment type="function">
    <text evidence="6 7 8 11 12">Activates ubiquitin by first adenylating its C-terminal glycine residue with ATP, and thereafter linking this residue to the side chain of a cysteine residue in E1, yielding a ubiquitin-E1 thioester and free AMP (PubMed:35970836, PubMed:35986001). Specific for ubiquitin, does not activate ubiquitin-like peptides. Also activates UBD/FAT10 conjugation via adenylation of its C-terminal glycine (PubMed:17889673, PubMed:35970836, PubMed:35986001). Differs from UBE1 in its specificity for substrate E2 charging. Does not charge cell cycle E2s, such as CDC34. Essential for embryonic development. Isoform 2 may play a key role in ubiquitin system and may influence spermatogenesis and male fertility.</text>
</comment>
<comment type="catalytic activity">
    <reaction evidence="11 12">
        <text>ATP + ubiquitin + [E1 ubiquitin-activating enzyme]-L-cysteine = AMP + diphosphate + S-ubiquitinyl-[E1 ubiquitin-activating enzyme]-L-cysteine.</text>
        <dbReference type="EC" id="6.2.1.45"/>
    </reaction>
</comment>
<comment type="pathway">
    <text evidence="11 12">Protein modification; protein ubiquitination.</text>
</comment>
<comment type="subunit">
    <text evidence="8 10">Forms a thioester with UBD in cells stimulated with tumor necrosis factor-alpha (TNFa) and interferon-gamma (IFNg) (PubMed:17889673, PubMed:25422469).</text>
</comment>
<comment type="interaction">
    <interactant intactId="EBI-5282516">
        <id>A0AVT1</id>
    </interactant>
    <interactant intactId="EBI-2549423">
        <id>Q6NT76</id>
        <label>HMBOX1</label>
    </interactant>
    <organismsDiffer>false</organismsDiffer>
    <experiments>3</experiments>
</comment>
<comment type="alternative products">
    <event type="alternative splicing"/>
    <isoform>
        <id>A0AVT1-1</id>
        <name>1</name>
        <sequence type="displayed"/>
    </isoform>
    <isoform>
        <id>A0AVT1-2</id>
        <name>2</name>
        <name>nUBE1L</name>
        <sequence type="described" ref="VSP_023083"/>
    </isoform>
    <isoform>
        <id>A0AVT1-3</id>
        <name>3</name>
        <sequence type="described" ref="VSP_023086 VSP_023087"/>
    </isoform>
    <isoform>
        <id>A0AVT1-4</id>
        <name>4</name>
        <sequence type="described" ref="VSP_023084 VSP_023085"/>
    </isoform>
</comment>
<comment type="tissue specificity">
    <text evidence="6 7">Widely expressed. Isoform 2 is predominantly expressed in testis with higher expression in adult testis than in fetal testis.</text>
</comment>
<comment type="similarity">
    <text evidence="16">Belongs to the ubiquitin-activating E1 family.</text>
</comment>
<comment type="sequence caution" evidence="16">
    <conflict type="erroneous initiation">
        <sequence resource="EMBL-CDS" id="BAA91824"/>
    </conflict>
    <text>Truncated N-terminus.</text>
</comment>